<organism>
    <name type="scientific">Saguinus oedipus</name>
    <name type="common">Cotton-top tamarin</name>
    <dbReference type="NCBI Taxonomy" id="9490"/>
    <lineage>
        <taxon>Eukaryota</taxon>
        <taxon>Metazoa</taxon>
        <taxon>Chordata</taxon>
        <taxon>Craniata</taxon>
        <taxon>Vertebrata</taxon>
        <taxon>Euteleostomi</taxon>
        <taxon>Mammalia</taxon>
        <taxon>Eutheria</taxon>
        <taxon>Euarchontoglires</taxon>
        <taxon>Primates</taxon>
        <taxon>Haplorrhini</taxon>
        <taxon>Platyrrhini</taxon>
        <taxon>Cebidae</taxon>
        <taxon>Callitrichinae</taxon>
        <taxon>Saguinus</taxon>
    </lineage>
</organism>
<evidence type="ECO:0000250" key="1">
    <source>
        <dbReference type="UniProtKB" id="P17742"/>
    </source>
</evidence>
<evidence type="ECO:0000250" key="2">
    <source>
        <dbReference type="UniProtKB" id="P62937"/>
    </source>
</evidence>
<evidence type="ECO:0000255" key="3"/>
<evidence type="ECO:0000255" key="4">
    <source>
        <dbReference type="PROSITE-ProRule" id="PRU00156"/>
    </source>
</evidence>
<evidence type="ECO:0000305" key="5"/>
<dbReference type="EC" id="5.2.1.8" evidence="2"/>
<dbReference type="EMBL" id="DQ251284">
    <property type="protein sequence ID" value="ABB77884.1"/>
    <property type="molecule type" value="Genomic_DNA"/>
</dbReference>
<dbReference type="SMR" id="Q0ZQK3"/>
<dbReference type="GlyCosmos" id="Q0ZQK3">
    <property type="glycosylation" value="1 site, No reported glycans"/>
</dbReference>
<dbReference type="GO" id="GO:0005737">
    <property type="term" value="C:cytoplasm"/>
    <property type="evidence" value="ECO:0000250"/>
    <property type="project" value="UniProtKB"/>
</dbReference>
<dbReference type="GO" id="GO:0005829">
    <property type="term" value="C:cytosol"/>
    <property type="evidence" value="ECO:0000250"/>
    <property type="project" value="UniProtKB"/>
</dbReference>
<dbReference type="GO" id="GO:0005576">
    <property type="term" value="C:extracellular region"/>
    <property type="evidence" value="ECO:0000250"/>
    <property type="project" value="UniProtKB"/>
</dbReference>
<dbReference type="GO" id="GO:0005634">
    <property type="term" value="C:nucleus"/>
    <property type="evidence" value="ECO:0000250"/>
    <property type="project" value="UniProtKB"/>
</dbReference>
<dbReference type="GO" id="GO:0016018">
    <property type="term" value="F:cyclosporin A binding"/>
    <property type="evidence" value="ECO:0007669"/>
    <property type="project" value="TreeGrafter"/>
</dbReference>
<dbReference type="GO" id="GO:1904399">
    <property type="term" value="F:heparan sulfate binding"/>
    <property type="evidence" value="ECO:0000250"/>
    <property type="project" value="UniProtKB"/>
</dbReference>
<dbReference type="GO" id="GO:0005178">
    <property type="term" value="F:integrin binding"/>
    <property type="evidence" value="ECO:0000250"/>
    <property type="project" value="UniProtKB"/>
</dbReference>
<dbReference type="GO" id="GO:0003755">
    <property type="term" value="F:peptidyl-prolyl cis-trans isomerase activity"/>
    <property type="evidence" value="ECO:0000250"/>
    <property type="project" value="UniProtKB"/>
</dbReference>
<dbReference type="GO" id="GO:0032148">
    <property type="term" value="P:activation of protein kinase B activity"/>
    <property type="evidence" value="ECO:0000250"/>
    <property type="project" value="UniProtKB"/>
</dbReference>
<dbReference type="GO" id="GO:0006915">
    <property type="term" value="P:apoptotic process"/>
    <property type="evidence" value="ECO:0000250"/>
    <property type="project" value="UniProtKB"/>
</dbReference>
<dbReference type="GO" id="GO:0060352">
    <property type="term" value="P:cell adhesion molecule production"/>
    <property type="evidence" value="ECO:0000250"/>
    <property type="project" value="UniProtKB"/>
</dbReference>
<dbReference type="GO" id="GO:0034599">
    <property type="term" value="P:cellular response to oxidative stress"/>
    <property type="evidence" value="ECO:0000250"/>
    <property type="project" value="UniProtKB"/>
</dbReference>
<dbReference type="GO" id="GO:0042118">
    <property type="term" value="P:endothelial cell activation"/>
    <property type="evidence" value="ECO:0000250"/>
    <property type="project" value="UniProtKB"/>
</dbReference>
<dbReference type="GO" id="GO:0030595">
    <property type="term" value="P:leukocyte chemotaxis"/>
    <property type="evidence" value="ECO:0000250"/>
    <property type="project" value="UniProtKB"/>
</dbReference>
<dbReference type="GO" id="GO:1902176">
    <property type="term" value="P:negative regulation of oxidative stress-induced intrinsic apoptotic signaling pathway"/>
    <property type="evidence" value="ECO:0000250"/>
    <property type="project" value="UniProtKB"/>
</dbReference>
<dbReference type="GO" id="GO:0061944">
    <property type="term" value="P:negative regulation of protein K48-linked ubiquitination"/>
    <property type="evidence" value="ECO:0000250"/>
    <property type="project" value="UniProtKB"/>
</dbReference>
<dbReference type="GO" id="GO:0006469">
    <property type="term" value="P:negative regulation of protein kinase activity"/>
    <property type="evidence" value="ECO:0000250"/>
    <property type="project" value="UniProtKB"/>
</dbReference>
<dbReference type="GO" id="GO:0001933">
    <property type="term" value="P:negative regulation of protein phosphorylation"/>
    <property type="evidence" value="ECO:0000250"/>
    <property type="project" value="UniProtKB"/>
</dbReference>
<dbReference type="GO" id="GO:0032873">
    <property type="term" value="P:negative regulation of stress-activated MAPK cascade"/>
    <property type="evidence" value="ECO:0000250"/>
    <property type="project" value="UniProtKB"/>
</dbReference>
<dbReference type="GO" id="GO:0030593">
    <property type="term" value="P:neutrophil chemotaxis"/>
    <property type="evidence" value="ECO:0000250"/>
    <property type="project" value="UniProtKB"/>
</dbReference>
<dbReference type="GO" id="GO:0030168">
    <property type="term" value="P:platelet activation"/>
    <property type="evidence" value="ECO:0000250"/>
    <property type="project" value="UniProtKB"/>
</dbReference>
<dbReference type="GO" id="GO:0070527">
    <property type="term" value="P:platelet aggregation"/>
    <property type="evidence" value="ECO:0000250"/>
    <property type="project" value="UniProtKB"/>
</dbReference>
<dbReference type="GO" id="GO:0043410">
    <property type="term" value="P:positive regulation of MAPK cascade"/>
    <property type="evidence" value="ECO:0000250"/>
    <property type="project" value="UniProtKB"/>
</dbReference>
<dbReference type="GO" id="GO:0051092">
    <property type="term" value="P:positive regulation of NF-kappaB transcription factor activity"/>
    <property type="evidence" value="ECO:0000250"/>
    <property type="project" value="UniProtKB"/>
</dbReference>
<dbReference type="GO" id="GO:0001934">
    <property type="term" value="P:positive regulation of protein phosphorylation"/>
    <property type="evidence" value="ECO:0000250"/>
    <property type="project" value="UniProtKB"/>
</dbReference>
<dbReference type="GO" id="GO:0006457">
    <property type="term" value="P:protein folding"/>
    <property type="evidence" value="ECO:0007669"/>
    <property type="project" value="InterPro"/>
</dbReference>
<dbReference type="GO" id="GO:0000413">
    <property type="term" value="P:protein peptidyl-prolyl isomerization"/>
    <property type="evidence" value="ECO:0000250"/>
    <property type="project" value="UniProtKB"/>
</dbReference>
<dbReference type="GO" id="GO:2001233">
    <property type="term" value="P:regulation of apoptotic signaling pathway"/>
    <property type="evidence" value="ECO:0000250"/>
    <property type="project" value="UniProtKB"/>
</dbReference>
<dbReference type="GO" id="GO:0045069">
    <property type="term" value="P:regulation of viral genome replication"/>
    <property type="evidence" value="ECO:0000250"/>
    <property type="project" value="UniProtKB"/>
</dbReference>
<dbReference type="CDD" id="cd01926">
    <property type="entry name" value="cyclophilin_ABH_like"/>
    <property type="match status" value="1"/>
</dbReference>
<dbReference type="FunFam" id="2.40.100.10:FF:000011">
    <property type="entry name" value="Peptidyl-prolyl cis-trans isomerase A"/>
    <property type="match status" value="1"/>
</dbReference>
<dbReference type="Gene3D" id="2.40.100.10">
    <property type="entry name" value="Cyclophilin-like"/>
    <property type="match status" value="1"/>
</dbReference>
<dbReference type="InterPro" id="IPR029000">
    <property type="entry name" value="Cyclophilin-like_dom_sf"/>
</dbReference>
<dbReference type="InterPro" id="IPR024936">
    <property type="entry name" value="Cyclophilin-type_PPIase"/>
</dbReference>
<dbReference type="InterPro" id="IPR020892">
    <property type="entry name" value="Cyclophilin-type_PPIase_CS"/>
</dbReference>
<dbReference type="InterPro" id="IPR002130">
    <property type="entry name" value="Cyclophilin-type_PPIase_dom"/>
</dbReference>
<dbReference type="PANTHER" id="PTHR11071">
    <property type="entry name" value="PEPTIDYL-PROLYL CIS-TRANS ISOMERASE"/>
    <property type="match status" value="1"/>
</dbReference>
<dbReference type="PANTHER" id="PTHR11071:SF490">
    <property type="entry name" value="PEPTIDYL-PROLYL CIS-TRANS ISOMERASE A"/>
    <property type="match status" value="1"/>
</dbReference>
<dbReference type="Pfam" id="PF00160">
    <property type="entry name" value="Pro_isomerase"/>
    <property type="match status" value="1"/>
</dbReference>
<dbReference type="PIRSF" id="PIRSF001467">
    <property type="entry name" value="Peptidylpro_ismrse"/>
    <property type="match status" value="1"/>
</dbReference>
<dbReference type="PRINTS" id="PR00153">
    <property type="entry name" value="CSAPPISMRASE"/>
</dbReference>
<dbReference type="SUPFAM" id="SSF50891">
    <property type="entry name" value="Cyclophilin-like"/>
    <property type="match status" value="1"/>
</dbReference>
<dbReference type="PROSITE" id="PS00170">
    <property type="entry name" value="CSA_PPIASE_1"/>
    <property type="match status" value="1"/>
</dbReference>
<dbReference type="PROSITE" id="PS50072">
    <property type="entry name" value="CSA_PPIASE_2"/>
    <property type="match status" value="1"/>
</dbReference>
<feature type="chain" id="PRO_0000423253" description="Peptidyl-prolyl cis-trans isomerase A">
    <location>
        <begin position="1"/>
        <end position="164"/>
    </location>
</feature>
<feature type="initiator methionine" description="Removed; alternate" evidence="2">
    <location>
        <position position="1"/>
    </location>
</feature>
<feature type="chain" id="PRO_0000260465" description="Peptidyl-prolyl cis-trans isomerase A, N-terminally processed">
    <location>
        <begin position="2"/>
        <end position="164"/>
    </location>
</feature>
<feature type="domain" description="PPIase cyclophilin-type" evidence="4">
    <location>
        <begin position="7"/>
        <end position="163"/>
    </location>
</feature>
<feature type="modified residue" description="N-acetylmethionine" evidence="2">
    <location>
        <position position="1"/>
    </location>
</feature>
<feature type="modified residue" description="N-acetylvaline; in Peptidyl-prolyl cis-trans isomerase A, N-terminally processed" evidence="2">
    <location>
        <position position="2"/>
    </location>
</feature>
<feature type="modified residue" description="N6-acetyllysine; alternate" evidence="2">
    <location>
        <position position="28"/>
    </location>
</feature>
<feature type="modified residue" description="N6-acetyllysine" evidence="2">
    <location>
        <position position="44"/>
    </location>
</feature>
<feature type="modified residue" description="N6-acetyllysine" evidence="2">
    <location>
        <position position="76"/>
    </location>
</feature>
<feature type="modified residue" description="Phosphoserine" evidence="2">
    <location>
        <position position="77"/>
    </location>
</feature>
<feature type="modified residue" description="N6-acetyllysine; alternate" evidence="2">
    <location>
        <position position="82"/>
    </location>
</feature>
<feature type="modified residue" description="Phosphothreonine" evidence="2">
    <location>
        <position position="93"/>
    </location>
</feature>
<feature type="modified residue" description="N6-acetyllysine" evidence="2">
    <location>
        <position position="125"/>
    </location>
</feature>
<feature type="modified residue" description="N6-acetyllysine" evidence="2">
    <location>
        <position position="131"/>
    </location>
</feature>
<feature type="modified residue" description="N6-acetyllysine" evidence="1">
    <location>
        <position position="133"/>
    </location>
</feature>
<feature type="glycosylation site" description="N-linked (GlcNAc...) asparagine" evidence="3">
    <location>
        <position position="108"/>
    </location>
</feature>
<feature type="cross-link" description="Glycyl lysine isopeptide (Lys-Gly) (interchain with G-Cter in SUMO2); alternate" evidence="2">
    <location>
        <position position="28"/>
    </location>
</feature>
<feature type="cross-link" description="Glycyl lysine isopeptide (Lys-Gly) (interchain with G-Cter in ubiquitin); alternate" evidence="2">
    <location>
        <position position="28"/>
    </location>
</feature>
<feature type="cross-link" description="Glycyl lysine isopeptide (Lys-Gly) (interchain with G-Cter in SUMO2); alternate" evidence="2">
    <location>
        <position position="82"/>
    </location>
</feature>
<sequence>MVNPTVFFDIAVDGEPLGRVSFELFADKVPKTAENFRALSTGEKGFGYKGSCFHRIIPGFMCQGGDFTRHNGTGGKSIYGEKFDDENFILKHTGPGILSMANAGPNTNGSQFFICTVKTEWLDGKHVVFGKVKEGMNIVEAMERFGSRNGKTSKKITIADCGQL</sequence>
<name>PPIA_SAGOE</name>
<proteinExistence type="inferred from homology"/>
<comment type="function">
    <text evidence="1 2">Catalyzes the cis-trans isomerization of proline imidic peptide bonds in oligopeptides (By similarity). Exerts a strong chemotactic effect on leukocytes partly through activation of one of its membrane receptors BSG/CD147, initiating a signaling cascade that culminates in MAPK/ERK activation (By similarity). Activates endothelial cells (ECs) in a proinflammatory manner by stimulating activation of NF-kappa-B and ERK, JNK and p38 MAP-kinases and by inducing expression of adhesion molecules including SELE and VCAM1 (By similarity). Induces apoptosis in ECs by promoting the FOXO1-dependent expression of CCL2 and BCL2L11 which are involved in EC chemotaxis and apoptosis (By similarity). In response to oxidative stress, initiates proapoptotic and antiapoptotic signaling in ECs via activation of NF-kappa-B and AKT1 and up-regulation of antiapoptotic protein BCL2 (By similarity). Negatively regulates MAP3K5/ASK1 kinase activity, autophosphorylation and oxidative stress-induced apoptosis mediated by MAP3K5/ASK1 (By similarity). Necessary for the assembly of TARDBP in heterogeneous nuclear ribonucleoprotein (hnRNP) complexes and regulates TARDBP binding to RNA UG repeats and TARDBP-dependent expression of HDAC6, ATG7 and VCP which are involved in clearance of protein aggregates (By similarity). Plays an important role in platelet activation and aggregation (By similarity). Regulates calcium mobilization and integrin ITGA2B:ITGB3 bidirectional signaling via increased ROS production as well as by facilitating the interaction between integrin and the cell cytoskeleton (By similarity). Binds heparan sulfate glycosaminoglycans (By similarity).</text>
</comment>
<comment type="catalytic activity">
    <reaction evidence="2">
        <text>[protein]-peptidylproline (omega=180) = [protein]-peptidylproline (omega=0)</text>
        <dbReference type="Rhea" id="RHEA:16237"/>
        <dbReference type="Rhea" id="RHEA-COMP:10747"/>
        <dbReference type="Rhea" id="RHEA-COMP:10748"/>
        <dbReference type="ChEBI" id="CHEBI:83833"/>
        <dbReference type="ChEBI" id="CHEBI:83834"/>
        <dbReference type="EC" id="5.2.1.8"/>
    </reaction>
</comment>
<comment type="activity regulation">
    <text evidence="2">Binds cyclosporin A (CsA). CsA mediates some of its effects via an inhibitory action on PPIase.</text>
</comment>
<comment type="subunit">
    <text evidence="1 2">Interacts with protein phosphatase PPP3CA/calcineurin A (By similarity). Interacts with isoform 2 of BSG/CD147 (By similarity). Interacts with FOXO1; the interaction promotes FOXO1 dephosphorylation, nuclear accumulation and transcriptional activity (By similarity). Interacts with integrin ITGA2B:ITGB3; the interaction is ROS and peptidyl-prolyl cis-trans isomerase (PPIase) activity-dependent and is increased in the presence of thrombin (By similarity). Interacts with MAP3K5 (By similarity). Interacts with TARDBP; the interaction is dependent on the RNA-binding activity of TARDBP and the PPIase activity of PPIA/CYPA and the acetylation of PPIA/CYPA at Lys-125 favors the interaction (By similarity). Interacts with HNRNPA1, HNRNPA2B1, HNRNPC, RBMX, HNRNPK and HNRNPM (By similarity).</text>
</comment>
<comment type="subcellular location">
    <subcellularLocation>
        <location evidence="2">Cytoplasm</location>
    </subcellularLocation>
    <subcellularLocation>
        <location evidence="2">Secreted</location>
    </subcellularLocation>
    <subcellularLocation>
        <location evidence="2">Nucleus</location>
    </subcellularLocation>
    <text evidence="2">Secretion occurs in response to oxidative stress in vascular smooth muscle through a vesicular secretory pathway that involves actin remodeling and myosin II activation, and mediates ERK1/2 activation.</text>
</comment>
<comment type="PTM">
    <text evidence="2">Acetylation at Lys-125 markedly inhibits catalysis of cis to trans isomerization (By similarity). PPIA acetylation also antagonizes the immunosuppressive effects of cyclosporine by inhibiting the sequential steps of cyclosporine binding and calcineurin inhibition (By similarity). Acetylation at Lys-125 favors the interaction with TARDBP (By similarity).</text>
</comment>
<comment type="similarity">
    <text evidence="5">Belongs to the cyclophilin-type PPIase family. PPIase A subfamily.</text>
</comment>
<protein>
    <recommendedName>
        <fullName>Peptidyl-prolyl cis-trans isomerase A</fullName>
        <shortName>PPIase A</shortName>
        <ecNumber evidence="2">5.2.1.8</ecNumber>
    </recommendedName>
    <alternativeName>
        <fullName>Cyclophilin A</fullName>
    </alternativeName>
    <alternativeName>
        <fullName>Cyclosporin A-binding protein</fullName>
    </alternativeName>
    <alternativeName>
        <fullName>Rotamase A</fullName>
    </alternativeName>
    <component>
        <recommendedName>
            <fullName>Peptidyl-prolyl cis-trans isomerase A, N-terminally processed</fullName>
        </recommendedName>
    </component>
</protein>
<gene>
    <name type="primary">PPIA</name>
</gene>
<reference key="1">
    <citation type="journal article" date="2006" name="Retrovirology">
        <title>Patterns of evolution of host proteins involved in retroviral pathogenesis.</title>
        <authorList>
            <person name="Ortiz M."/>
            <person name="Bleiber G."/>
            <person name="Martinez R."/>
            <person name="Kaessmann H."/>
            <person name="Telenti A."/>
        </authorList>
    </citation>
    <scope>NUCLEOTIDE SEQUENCE [GENOMIC DNA]</scope>
</reference>
<accession>Q0ZQK3</accession>
<keyword id="KW-0007">Acetylation</keyword>
<keyword id="KW-0053">Apoptosis</keyword>
<keyword id="KW-0963">Cytoplasm</keyword>
<keyword id="KW-0325">Glycoprotein</keyword>
<keyword id="KW-0413">Isomerase</keyword>
<keyword id="KW-1017">Isopeptide bond</keyword>
<keyword id="KW-0539">Nucleus</keyword>
<keyword id="KW-0597">Phosphoprotein</keyword>
<keyword id="KW-0697">Rotamase</keyword>
<keyword id="KW-0964">Secreted</keyword>
<keyword id="KW-0832">Ubl conjugation</keyword>